<proteinExistence type="predicted"/>
<keyword id="KW-1185">Reference proteome</keyword>
<gene>
    <name type="ORF">DDB_G0289989</name>
</gene>
<feature type="chain" id="PRO_0000346930" description="Putative uncharacterized protein DDB_G0289989">
    <location>
        <begin position="1"/>
        <end position="55"/>
    </location>
</feature>
<dbReference type="EMBL" id="AAFI02000150">
    <property type="protein sequence ID" value="EAL62440.1"/>
    <property type="molecule type" value="Genomic_DNA"/>
</dbReference>
<dbReference type="RefSeq" id="XP_635944.1">
    <property type="nucleotide sequence ID" value="XM_630852.1"/>
</dbReference>
<dbReference type="SMR" id="Q54GQ8"/>
<dbReference type="PaxDb" id="44689-DDB0188672"/>
<dbReference type="EnsemblProtists" id="EAL62440">
    <property type="protein sequence ID" value="EAL62440"/>
    <property type="gene ID" value="DDB_G0289989"/>
</dbReference>
<dbReference type="GeneID" id="8627426"/>
<dbReference type="KEGG" id="ddi:DDB_G0289989"/>
<dbReference type="dictyBase" id="DDB_G0289989"/>
<dbReference type="HOGENOM" id="CLU_3036386_0_0_1"/>
<dbReference type="InParanoid" id="Q54GQ8"/>
<dbReference type="PRO" id="PR:Q54GQ8"/>
<dbReference type="Proteomes" id="UP000002195">
    <property type="component" value="Chromosome 5"/>
</dbReference>
<organism>
    <name type="scientific">Dictyostelium discoideum</name>
    <name type="common">Social amoeba</name>
    <dbReference type="NCBI Taxonomy" id="44689"/>
    <lineage>
        <taxon>Eukaryota</taxon>
        <taxon>Amoebozoa</taxon>
        <taxon>Evosea</taxon>
        <taxon>Eumycetozoa</taxon>
        <taxon>Dictyostelia</taxon>
        <taxon>Dictyosteliales</taxon>
        <taxon>Dictyosteliaceae</taxon>
        <taxon>Dictyostelium</taxon>
    </lineage>
</organism>
<name>Y8672_DICDI</name>
<reference key="1">
    <citation type="journal article" date="2005" name="Nature">
        <title>The genome of the social amoeba Dictyostelium discoideum.</title>
        <authorList>
            <person name="Eichinger L."/>
            <person name="Pachebat J.A."/>
            <person name="Gloeckner G."/>
            <person name="Rajandream M.A."/>
            <person name="Sucgang R."/>
            <person name="Berriman M."/>
            <person name="Song J."/>
            <person name="Olsen R."/>
            <person name="Szafranski K."/>
            <person name="Xu Q."/>
            <person name="Tunggal B."/>
            <person name="Kummerfeld S."/>
            <person name="Madera M."/>
            <person name="Konfortov B.A."/>
            <person name="Rivero F."/>
            <person name="Bankier A.T."/>
            <person name="Lehmann R."/>
            <person name="Hamlin N."/>
            <person name="Davies R."/>
            <person name="Gaudet P."/>
            <person name="Fey P."/>
            <person name="Pilcher K."/>
            <person name="Chen G."/>
            <person name="Saunders D."/>
            <person name="Sodergren E.J."/>
            <person name="Davis P."/>
            <person name="Kerhornou A."/>
            <person name="Nie X."/>
            <person name="Hall N."/>
            <person name="Anjard C."/>
            <person name="Hemphill L."/>
            <person name="Bason N."/>
            <person name="Farbrother P."/>
            <person name="Desany B."/>
            <person name="Just E."/>
            <person name="Morio T."/>
            <person name="Rost R."/>
            <person name="Churcher C.M."/>
            <person name="Cooper J."/>
            <person name="Haydock S."/>
            <person name="van Driessche N."/>
            <person name="Cronin A."/>
            <person name="Goodhead I."/>
            <person name="Muzny D.M."/>
            <person name="Mourier T."/>
            <person name="Pain A."/>
            <person name="Lu M."/>
            <person name="Harper D."/>
            <person name="Lindsay R."/>
            <person name="Hauser H."/>
            <person name="James K.D."/>
            <person name="Quiles M."/>
            <person name="Madan Babu M."/>
            <person name="Saito T."/>
            <person name="Buchrieser C."/>
            <person name="Wardroper A."/>
            <person name="Felder M."/>
            <person name="Thangavelu M."/>
            <person name="Johnson D."/>
            <person name="Knights A."/>
            <person name="Loulseged H."/>
            <person name="Mungall K.L."/>
            <person name="Oliver K."/>
            <person name="Price C."/>
            <person name="Quail M.A."/>
            <person name="Urushihara H."/>
            <person name="Hernandez J."/>
            <person name="Rabbinowitsch E."/>
            <person name="Steffen D."/>
            <person name="Sanders M."/>
            <person name="Ma J."/>
            <person name="Kohara Y."/>
            <person name="Sharp S."/>
            <person name="Simmonds M.N."/>
            <person name="Spiegler S."/>
            <person name="Tivey A."/>
            <person name="Sugano S."/>
            <person name="White B."/>
            <person name="Walker D."/>
            <person name="Woodward J.R."/>
            <person name="Winckler T."/>
            <person name="Tanaka Y."/>
            <person name="Shaulsky G."/>
            <person name="Schleicher M."/>
            <person name="Weinstock G.M."/>
            <person name="Rosenthal A."/>
            <person name="Cox E.C."/>
            <person name="Chisholm R.L."/>
            <person name="Gibbs R.A."/>
            <person name="Loomis W.F."/>
            <person name="Platzer M."/>
            <person name="Kay R.R."/>
            <person name="Williams J.G."/>
            <person name="Dear P.H."/>
            <person name="Noegel A.A."/>
            <person name="Barrell B.G."/>
            <person name="Kuspa A."/>
        </authorList>
    </citation>
    <scope>NUCLEOTIDE SEQUENCE [LARGE SCALE GENOMIC DNA]</scope>
    <source>
        <strain>AX4</strain>
    </source>
</reference>
<accession>Q54GQ8</accession>
<protein>
    <recommendedName>
        <fullName>Putative uncharacterized protein DDB_G0289989</fullName>
    </recommendedName>
</protein>
<sequence>MLFNNIQTFSFKNININNLNKIKKETENSNSNYSLNSINSNKIQTNLFTRPNWSI</sequence>